<gene>
    <name evidence="1" type="primary">def</name>
    <name type="ordered locus">SPP_1476</name>
</gene>
<proteinExistence type="inferred from homology"/>
<feature type="chain" id="PRO_1000200750" description="Peptide deformylase">
    <location>
        <begin position="1"/>
        <end position="203"/>
    </location>
</feature>
<feature type="active site" evidence="1">
    <location>
        <position position="174"/>
    </location>
</feature>
<feature type="binding site" evidence="1">
    <location>
        <position position="130"/>
    </location>
    <ligand>
        <name>Fe cation</name>
        <dbReference type="ChEBI" id="CHEBI:24875"/>
    </ligand>
</feature>
<feature type="binding site" evidence="1">
    <location>
        <position position="173"/>
    </location>
    <ligand>
        <name>Fe cation</name>
        <dbReference type="ChEBI" id="CHEBI:24875"/>
    </ligand>
</feature>
<feature type="binding site" evidence="1">
    <location>
        <position position="177"/>
    </location>
    <ligand>
        <name>Fe cation</name>
        <dbReference type="ChEBI" id="CHEBI:24875"/>
    </ligand>
</feature>
<evidence type="ECO:0000255" key="1">
    <source>
        <dbReference type="HAMAP-Rule" id="MF_00163"/>
    </source>
</evidence>
<protein>
    <recommendedName>
        <fullName evidence="1">Peptide deformylase</fullName>
        <shortName evidence="1">PDF</shortName>
        <ecNumber evidence="1">3.5.1.88</ecNumber>
    </recommendedName>
    <alternativeName>
        <fullName evidence="1">Polypeptide deformylase</fullName>
    </alternativeName>
</protein>
<organism>
    <name type="scientific">Streptococcus pneumoniae (strain P1031)</name>
    <dbReference type="NCBI Taxonomy" id="488223"/>
    <lineage>
        <taxon>Bacteria</taxon>
        <taxon>Bacillati</taxon>
        <taxon>Bacillota</taxon>
        <taxon>Bacilli</taxon>
        <taxon>Lactobacillales</taxon>
        <taxon>Streptococcaceae</taxon>
        <taxon>Streptococcus</taxon>
    </lineage>
</organism>
<keyword id="KW-0378">Hydrolase</keyword>
<keyword id="KW-0408">Iron</keyword>
<keyword id="KW-0479">Metal-binding</keyword>
<keyword id="KW-0648">Protein biosynthesis</keyword>
<name>DEF_STRZP</name>
<dbReference type="EC" id="3.5.1.88" evidence="1"/>
<dbReference type="EMBL" id="CP000920">
    <property type="protein sequence ID" value="ACO21978.1"/>
    <property type="molecule type" value="Genomic_DNA"/>
</dbReference>
<dbReference type="RefSeq" id="WP_001272941.1">
    <property type="nucleotide sequence ID" value="NC_012467.1"/>
</dbReference>
<dbReference type="SMR" id="C1CLF5"/>
<dbReference type="GeneID" id="45653294"/>
<dbReference type="KEGG" id="spp:SPP_1476"/>
<dbReference type="HOGENOM" id="CLU_061901_4_0_9"/>
<dbReference type="GO" id="GO:0046872">
    <property type="term" value="F:metal ion binding"/>
    <property type="evidence" value="ECO:0007669"/>
    <property type="project" value="UniProtKB-KW"/>
</dbReference>
<dbReference type="GO" id="GO:0042586">
    <property type="term" value="F:peptide deformylase activity"/>
    <property type="evidence" value="ECO:0007669"/>
    <property type="project" value="UniProtKB-UniRule"/>
</dbReference>
<dbReference type="GO" id="GO:0043686">
    <property type="term" value="P:co-translational protein modification"/>
    <property type="evidence" value="ECO:0007669"/>
    <property type="project" value="TreeGrafter"/>
</dbReference>
<dbReference type="GO" id="GO:0006412">
    <property type="term" value="P:translation"/>
    <property type="evidence" value="ECO:0007669"/>
    <property type="project" value="UniProtKB-UniRule"/>
</dbReference>
<dbReference type="CDD" id="cd00487">
    <property type="entry name" value="Pep_deformylase"/>
    <property type="match status" value="1"/>
</dbReference>
<dbReference type="FunFam" id="3.90.45.10:FF:000002">
    <property type="entry name" value="Peptide deformylase"/>
    <property type="match status" value="1"/>
</dbReference>
<dbReference type="Gene3D" id="3.90.45.10">
    <property type="entry name" value="Peptide deformylase"/>
    <property type="match status" value="1"/>
</dbReference>
<dbReference type="HAMAP" id="MF_00163">
    <property type="entry name" value="Pep_deformylase"/>
    <property type="match status" value="1"/>
</dbReference>
<dbReference type="InterPro" id="IPR023635">
    <property type="entry name" value="Peptide_deformylase"/>
</dbReference>
<dbReference type="InterPro" id="IPR036821">
    <property type="entry name" value="Peptide_deformylase_sf"/>
</dbReference>
<dbReference type="NCBIfam" id="TIGR00079">
    <property type="entry name" value="pept_deformyl"/>
    <property type="match status" value="1"/>
</dbReference>
<dbReference type="PANTHER" id="PTHR10458">
    <property type="entry name" value="PEPTIDE DEFORMYLASE"/>
    <property type="match status" value="1"/>
</dbReference>
<dbReference type="PANTHER" id="PTHR10458:SF8">
    <property type="entry name" value="PEPTIDE DEFORMYLASE 2"/>
    <property type="match status" value="1"/>
</dbReference>
<dbReference type="Pfam" id="PF01327">
    <property type="entry name" value="Pep_deformylase"/>
    <property type="match status" value="1"/>
</dbReference>
<dbReference type="PIRSF" id="PIRSF004749">
    <property type="entry name" value="Pep_def"/>
    <property type="match status" value="1"/>
</dbReference>
<dbReference type="PRINTS" id="PR01576">
    <property type="entry name" value="PDEFORMYLASE"/>
</dbReference>
<dbReference type="SUPFAM" id="SSF56420">
    <property type="entry name" value="Peptide deformylase"/>
    <property type="match status" value="1"/>
</dbReference>
<comment type="function">
    <text evidence="1">Removes the formyl group from the N-terminal Met of newly synthesized proteins. Requires at least a dipeptide for an efficient rate of reaction. N-terminal L-methionine is a prerequisite for activity but the enzyme has broad specificity at other positions.</text>
</comment>
<comment type="catalytic activity">
    <reaction evidence="1">
        <text>N-terminal N-formyl-L-methionyl-[peptide] + H2O = N-terminal L-methionyl-[peptide] + formate</text>
        <dbReference type="Rhea" id="RHEA:24420"/>
        <dbReference type="Rhea" id="RHEA-COMP:10639"/>
        <dbReference type="Rhea" id="RHEA-COMP:10640"/>
        <dbReference type="ChEBI" id="CHEBI:15377"/>
        <dbReference type="ChEBI" id="CHEBI:15740"/>
        <dbReference type="ChEBI" id="CHEBI:49298"/>
        <dbReference type="ChEBI" id="CHEBI:64731"/>
        <dbReference type="EC" id="3.5.1.88"/>
    </reaction>
</comment>
<comment type="cofactor">
    <cofactor evidence="1">
        <name>Fe(2+)</name>
        <dbReference type="ChEBI" id="CHEBI:29033"/>
    </cofactor>
    <text evidence="1">Binds 1 Fe(2+) ion.</text>
</comment>
<comment type="similarity">
    <text evidence="1">Belongs to the polypeptide deformylase family.</text>
</comment>
<accession>C1CLF5</accession>
<sequence>MSAIERITKAAHLIDMNDIIREGNPTLRAIAEEVTFPLSDQEIILGEKMMQFLKHSQDPVMAEKMGLRGGVGLAAPQLDISKRIIAVLVPNIVEEGETPQEAYDLEAIMYNPKIVSHSVQDAALGEGEGCLSVDRNVPGYVVRHARVTVDYFDKDGEKHRIKLKGYNSIVVQHEIDHINGIMFYDRINEKDPFAVKDGLLILE</sequence>
<reference key="1">
    <citation type="journal article" date="2010" name="Genome Biol.">
        <title>Structure and dynamics of the pan-genome of Streptococcus pneumoniae and closely related species.</title>
        <authorList>
            <person name="Donati C."/>
            <person name="Hiller N.L."/>
            <person name="Tettelin H."/>
            <person name="Muzzi A."/>
            <person name="Croucher N.J."/>
            <person name="Angiuoli S.V."/>
            <person name="Oggioni M."/>
            <person name="Dunning Hotopp J.C."/>
            <person name="Hu F.Z."/>
            <person name="Riley D.R."/>
            <person name="Covacci A."/>
            <person name="Mitchell T.J."/>
            <person name="Bentley S.D."/>
            <person name="Kilian M."/>
            <person name="Ehrlich G.D."/>
            <person name="Rappuoli R."/>
            <person name="Moxon E.R."/>
            <person name="Masignani V."/>
        </authorList>
    </citation>
    <scope>NUCLEOTIDE SEQUENCE [LARGE SCALE GENOMIC DNA]</scope>
    <source>
        <strain>P1031</strain>
    </source>
</reference>